<reference key="1">
    <citation type="journal article" date="2006" name="PLoS Genet.">
        <title>The complete genome sequence and comparative genome analysis of the high pathogenicity Yersinia enterocolitica strain 8081.</title>
        <authorList>
            <person name="Thomson N.R."/>
            <person name="Howard S."/>
            <person name="Wren B.W."/>
            <person name="Holden M.T.G."/>
            <person name="Crossman L."/>
            <person name="Challis G.L."/>
            <person name="Churcher C."/>
            <person name="Mungall K."/>
            <person name="Brooks K."/>
            <person name="Chillingworth T."/>
            <person name="Feltwell T."/>
            <person name="Abdellah Z."/>
            <person name="Hauser H."/>
            <person name="Jagels K."/>
            <person name="Maddison M."/>
            <person name="Moule S."/>
            <person name="Sanders M."/>
            <person name="Whitehead S."/>
            <person name="Quail M.A."/>
            <person name="Dougan G."/>
            <person name="Parkhill J."/>
            <person name="Prentice M.B."/>
        </authorList>
    </citation>
    <scope>NUCLEOTIDE SEQUENCE [LARGE SCALE GENOMIC DNA]</scope>
    <source>
        <strain>NCTC 13174 / 8081</strain>
    </source>
</reference>
<keyword id="KW-0067">ATP-binding</keyword>
<keyword id="KW-0317">Glutathione biosynthesis</keyword>
<keyword id="KW-0436">Ligase</keyword>
<keyword id="KW-0547">Nucleotide-binding</keyword>
<organism>
    <name type="scientific">Yersinia enterocolitica serotype O:8 / biotype 1B (strain NCTC 13174 / 8081)</name>
    <dbReference type="NCBI Taxonomy" id="393305"/>
    <lineage>
        <taxon>Bacteria</taxon>
        <taxon>Pseudomonadati</taxon>
        <taxon>Pseudomonadota</taxon>
        <taxon>Gammaproteobacteria</taxon>
        <taxon>Enterobacterales</taxon>
        <taxon>Yersiniaceae</taxon>
        <taxon>Yersinia</taxon>
    </lineage>
</organism>
<dbReference type="EC" id="6.3.2.2" evidence="1"/>
<dbReference type="EMBL" id="AM286415">
    <property type="protein sequence ID" value="CAL10938.1"/>
    <property type="molecule type" value="Genomic_DNA"/>
</dbReference>
<dbReference type="RefSeq" id="YP_001005176.1">
    <property type="nucleotide sequence ID" value="NC_008800.1"/>
</dbReference>
<dbReference type="SMR" id="A1JK14"/>
<dbReference type="KEGG" id="yen:YE0838"/>
<dbReference type="PATRIC" id="fig|393305.7.peg.932"/>
<dbReference type="eggNOG" id="COG2918">
    <property type="taxonomic scope" value="Bacteria"/>
</dbReference>
<dbReference type="HOGENOM" id="CLU_020728_3_0_6"/>
<dbReference type="OrthoDB" id="9803907at2"/>
<dbReference type="UniPathway" id="UPA00142">
    <property type="reaction ID" value="UER00209"/>
</dbReference>
<dbReference type="Proteomes" id="UP000000642">
    <property type="component" value="Chromosome"/>
</dbReference>
<dbReference type="GO" id="GO:0005829">
    <property type="term" value="C:cytosol"/>
    <property type="evidence" value="ECO:0007669"/>
    <property type="project" value="TreeGrafter"/>
</dbReference>
<dbReference type="GO" id="GO:0005524">
    <property type="term" value="F:ATP binding"/>
    <property type="evidence" value="ECO:0007669"/>
    <property type="project" value="UniProtKB-KW"/>
</dbReference>
<dbReference type="GO" id="GO:0004357">
    <property type="term" value="F:glutamate-cysteine ligase activity"/>
    <property type="evidence" value="ECO:0007669"/>
    <property type="project" value="UniProtKB-UniRule"/>
</dbReference>
<dbReference type="GO" id="GO:0046872">
    <property type="term" value="F:metal ion binding"/>
    <property type="evidence" value="ECO:0007669"/>
    <property type="project" value="TreeGrafter"/>
</dbReference>
<dbReference type="GO" id="GO:0006750">
    <property type="term" value="P:glutathione biosynthetic process"/>
    <property type="evidence" value="ECO:0007669"/>
    <property type="project" value="UniProtKB-UniRule"/>
</dbReference>
<dbReference type="FunFam" id="3.30.590.20:FF:000001">
    <property type="entry name" value="Glutamate--cysteine ligase"/>
    <property type="match status" value="1"/>
</dbReference>
<dbReference type="Gene3D" id="3.30.590.20">
    <property type="match status" value="1"/>
</dbReference>
<dbReference type="HAMAP" id="MF_00578">
    <property type="entry name" value="Glu_cys_ligase"/>
    <property type="match status" value="1"/>
</dbReference>
<dbReference type="InterPro" id="IPR014746">
    <property type="entry name" value="Gln_synth/guanido_kin_cat_dom"/>
</dbReference>
<dbReference type="InterPro" id="IPR007370">
    <property type="entry name" value="Glu_cys_ligase"/>
</dbReference>
<dbReference type="InterPro" id="IPR006334">
    <property type="entry name" value="Glut_cys_ligase"/>
</dbReference>
<dbReference type="NCBIfam" id="TIGR01434">
    <property type="entry name" value="glu_cys_ligase"/>
    <property type="match status" value="1"/>
</dbReference>
<dbReference type="PANTHER" id="PTHR38761">
    <property type="entry name" value="GLUTAMATE--CYSTEINE LIGASE"/>
    <property type="match status" value="1"/>
</dbReference>
<dbReference type="PANTHER" id="PTHR38761:SF1">
    <property type="entry name" value="GLUTAMATE--CYSTEINE LIGASE"/>
    <property type="match status" value="1"/>
</dbReference>
<dbReference type="Pfam" id="PF04262">
    <property type="entry name" value="Glu_cys_ligase"/>
    <property type="match status" value="1"/>
</dbReference>
<dbReference type="SUPFAM" id="SSF55931">
    <property type="entry name" value="Glutamine synthetase/guanido kinase"/>
    <property type="match status" value="1"/>
</dbReference>
<gene>
    <name evidence="1" type="primary">gshA</name>
    <name type="ordered locus">YE0838</name>
</gene>
<feature type="chain" id="PRO_1000025193" description="Glutamate--cysteine ligase">
    <location>
        <begin position="1"/>
        <end position="519"/>
    </location>
</feature>
<evidence type="ECO:0000255" key="1">
    <source>
        <dbReference type="HAMAP-Rule" id="MF_00578"/>
    </source>
</evidence>
<comment type="catalytic activity">
    <reaction evidence="1">
        <text>L-cysteine + L-glutamate + ATP = gamma-L-glutamyl-L-cysteine + ADP + phosphate + H(+)</text>
        <dbReference type="Rhea" id="RHEA:13285"/>
        <dbReference type="ChEBI" id="CHEBI:15378"/>
        <dbReference type="ChEBI" id="CHEBI:29985"/>
        <dbReference type="ChEBI" id="CHEBI:30616"/>
        <dbReference type="ChEBI" id="CHEBI:35235"/>
        <dbReference type="ChEBI" id="CHEBI:43474"/>
        <dbReference type="ChEBI" id="CHEBI:58173"/>
        <dbReference type="ChEBI" id="CHEBI:456216"/>
        <dbReference type="EC" id="6.3.2.2"/>
    </reaction>
</comment>
<comment type="pathway">
    <text evidence="1">Sulfur metabolism; glutathione biosynthesis; glutathione from L-cysteine and L-glutamate: step 1/2.</text>
</comment>
<comment type="similarity">
    <text evidence="1">Belongs to the glutamate--cysteine ligase type 1 family. Type 1 subfamily.</text>
</comment>
<sequence length="519" mass="58444">MIPDVSHALTWLEAHPKALKGIRRGIERETLRVTADGQLASTGHPESLGAALTHQWITTDFAEALLEFITPVDGDIDHLLTFLRDIHRYTARKLGDERMWPLSMPCFIGAEQDIELAKYGSSNIGRFKTLYREGLKNRYGALMQTISGVHYNFSLPLEFWQAWAGVTDEKSGKEEISAGYFRLIRNYYRFGWVIPYLFGASPAICASFLQGRETALPFERNDKGMCYLPYATSLRLSDLGYTNKSQSNLGITFNDLHTYVAGLKRAIQTPSEEYAALGLKDGDRHLQLNTNVLQIENELYAPIRPKRVTRAGESPSDALLRGGIEYIEVRSLDINPFSPIGVDAVQARFLDLFLIWCVLADAPEMSSDELLCTRKNWNRVILEGRKPGQTIGMGCNDTREPLEKVGKDLFTDLRRVAEVLDGKDSTEYQQVCDELVASFDDPSLTFSARILQAMKEGGIGGVGLELAERYREMLQNEPLELLTEEQLSEEGAASWVRQRELELKDKLSFEEYLALHGGQ</sequence>
<accession>A1JK14</accession>
<proteinExistence type="inferred from homology"/>
<name>GSH1_YERE8</name>
<protein>
    <recommendedName>
        <fullName evidence="1">Glutamate--cysteine ligase</fullName>
        <ecNumber evidence="1">6.3.2.2</ecNumber>
    </recommendedName>
    <alternativeName>
        <fullName evidence="1">Gamma-ECS</fullName>
        <shortName evidence="1">GCS</shortName>
    </alternativeName>
    <alternativeName>
        <fullName evidence="1">Gamma-glutamylcysteine synthetase</fullName>
    </alternativeName>
</protein>